<organism>
    <name type="scientific">Stutzerimonas stutzeri (strain A1501)</name>
    <name type="common">Pseudomonas stutzeri</name>
    <dbReference type="NCBI Taxonomy" id="379731"/>
    <lineage>
        <taxon>Bacteria</taxon>
        <taxon>Pseudomonadati</taxon>
        <taxon>Pseudomonadota</taxon>
        <taxon>Gammaproteobacteria</taxon>
        <taxon>Pseudomonadales</taxon>
        <taxon>Pseudomonadaceae</taxon>
        <taxon>Stutzerimonas</taxon>
    </lineage>
</organism>
<feature type="chain" id="PRO_1000024206" description="Dihydroorotate dehydrogenase (quinone)">
    <location>
        <begin position="1"/>
        <end position="343"/>
    </location>
</feature>
<feature type="active site" description="Nucleophile" evidence="1">
    <location>
        <position position="174"/>
    </location>
</feature>
<feature type="binding site" evidence="1">
    <location>
        <begin position="61"/>
        <end position="65"/>
    </location>
    <ligand>
        <name>FMN</name>
        <dbReference type="ChEBI" id="CHEBI:58210"/>
    </ligand>
</feature>
<feature type="binding site" evidence="1">
    <location>
        <position position="65"/>
    </location>
    <ligand>
        <name>substrate</name>
    </ligand>
</feature>
<feature type="binding site" evidence="1">
    <location>
        <position position="85"/>
    </location>
    <ligand>
        <name>FMN</name>
        <dbReference type="ChEBI" id="CHEBI:58210"/>
    </ligand>
</feature>
<feature type="binding site" evidence="1">
    <location>
        <begin position="110"/>
        <end position="114"/>
    </location>
    <ligand>
        <name>substrate</name>
    </ligand>
</feature>
<feature type="binding site" evidence="1">
    <location>
        <position position="138"/>
    </location>
    <ligand>
        <name>FMN</name>
        <dbReference type="ChEBI" id="CHEBI:58210"/>
    </ligand>
</feature>
<feature type="binding site" evidence="1">
    <location>
        <position position="171"/>
    </location>
    <ligand>
        <name>FMN</name>
        <dbReference type="ChEBI" id="CHEBI:58210"/>
    </ligand>
</feature>
<feature type="binding site" evidence="1">
    <location>
        <position position="171"/>
    </location>
    <ligand>
        <name>substrate</name>
    </ligand>
</feature>
<feature type="binding site" evidence="1">
    <location>
        <position position="176"/>
    </location>
    <ligand>
        <name>substrate</name>
    </ligand>
</feature>
<feature type="binding site" evidence="1">
    <location>
        <position position="216"/>
    </location>
    <ligand>
        <name>FMN</name>
        <dbReference type="ChEBI" id="CHEBI:58210"/>
    </ligand>
</feature>
<feature type="binding site" evidence="1">
    <location>
        <position position="244"/>
    </location>
    <ligand>
        <name>FMN</name>
        <dbReference type="ChEBI" id="CHEBI:58210"/>
    </ligand>
</feature>
<feature type="binding site" evidence="1">
    <location>
        <begin position="245"/>
        <end position="246"/>
    </location>
    <ligand>
        <name>substrate</name>
    </ligand>
</feature>
<feature type="binding site" evidence="1">
    <location>
        <position position="267"/>
    </location>
    <ligand>
        <name>FMN</name>
        <dbReference type="ChEBI" id="CHEBI:58210"/>
    </ligand>
</feature>
<feature type="binding site" evidence="1">
    <location>
        <position position="296"/>
    </location>
    <ligand>
        <name>FMN</name>
        <dbReference type="ChEBI" id="CHEBI:58210"/>
    </ligand>
</feature>
<feature type="binding site" evidence="1">
    <location>
        <begin position="317"/>
        <end position="318"/>
    </location>
    <ligand>
        <name>FMN</name>
        <dbReference type="ChEBI" id="CHEBI:58210"/>
    </ligand>
</feature>
<gene>
    <name evidence="1" type="primary">pyrD</name>
    <name type="ordered locus">PST_2390</name>
</gene>
<name>PYRD_STUS1</name>
<keyword id="KW-1003">Cell membrane</keyword>
<keyword id="KW-0285">Flavoprotein</keyword>
<keyword id="KW-0288">FMN</keyword>
<keyword id="KW-0472">Membrane</keyword>
<keyword id="KW-0560">Oxidoreductase</keyword>
<keyword id="KW-0665">Pyrimidine biosynthesis</keyword>
<keyword id="KW-1185">Reference proteome</keyword>
<comment type="function">
    <text evidence="1">Catalyzes the conversion of dihydroorotate to orotate with quinone as electron acceptor.</text>
</comment>
<comment type="catalytic activity">
    <reaction evidence="1">
        <text>(S)-dihydroorotate + a quinone = orotate + a quinol</text>
        <dbReference type="Rhea" id="RHEA:30187"/>
        <dbReference type="ChEBI" id="CHEBI:24646"/>
        <dbReference type="ChEBI" id="CHEBI:30839"/>
        <dbReference type="ChEBI" id="CHEBI:30864"/>
        <dbReference type="ChEBI" id="CHEBI:132124"/>
        <dbReference type="EC" id="1.3.5.2"/>
    </reaction>
</comment>
<comment type="cofactor">
    <cofactor evidence="1">
        <name>FMN</name>
        <dbReference type="ChEBI" id="CHEBI:58210"/>
    </cofactor>
    <text evidence="1">Binds 1 FMN per subunit.</text>
</comment>
<comment type="pathway">
    <text evidence="1">Pyrimidine metabolism; UMP biosynthesis via de novo pathway; orotate from (S)-dihydroorotate (quinone route): step 1/1.</text>
</comment>
<comment type="subunit">
    <text evidence="1">Monomer.</text>
</comment>
<comment type="subcellular location">
    <subcellularLocation>
        <location evidence="1">Cell membrane</location>
        <topology evidence="1">Peripheral membrane protein</topology>
    </subcellularLocation>
</comment>
<comment type="similarity">
    <text evidence="1">Belongs to the dihydroorotate dehydrogenase family. Type 2 subfamily.</text>
</comment>
<protein>
    <recommendedName>
        <fullName evidence="1">Dihydroorotate dehydrogenase (quinone)</fullName>
        <ecNumber evidence="1">1.3.5.2</ecNumber>
    </recommendedName>
    <alternativeName>
        <fullName evidence="1">DHOdehase</fullName>
        <shortName evidence="1">DHOD</shortName>
        <shortName evidence="1">DHODase</shortName>
    </alternativeName>
    <alternativeName>
        <fullName evidence="1">Dihydroorotate oxidase</fullName>
    </alternativeName>
</protein>
<dbReference type="EC" id="1.3.5.2" evidence="1"/>
<dbReference type="EMBL" id="CP000304">
    <property type="protein sequence ID" value="ABP80042.1"/>
    <property type="molecule type" value="Genomic_DNA"/>
</dbReference>
<dbReference type="RefSeq" id="WP_011913505.1">
    <property type="nucleotide sequence ID" value="NC_009434.1"/>
</dbReference>
<dbReference type="SMR" id="A4VM41"/>
<dbReference type="KEGG" id="psa:PST_2390"/>
<dbReference type="eggNOG" id="COG0167">
    <property type="taxonomic scope" value="Bacteria"/>
</dbReference>
<dbReference type="HOGENOM" id="CLU_013640_2_0_6"/>
<dbReference type="UniPathway" id="UPA00070">
    <property type="reaction ID" value="UER00946"/>
</dbReference>
<dbReference type="Proteomes" id="UP000000233">
    <property type="component" value="Chromosome"/>
</dbReference>
<dbReference type="GO" id="GO:0005737">
    <property type="term" value="C:cytoplasm"/>
    <property type="evidence" value="ECO:0007669"/>
    <property type="project" value="InterPro"/>
</dbReference>
<dbReference type="GO" id="GO:0005886">
    <property type="term" value="C:plasma membrane"/>
    <property type="evidence" value="ECO:0007669"/>
    <property type="project" value="UniProtKB-SubCell"/>
</dbReference>
<dbReference type="GO" id="GO:0106430">
    <property type="term" value="F:dihydroorotate dehydrogenase (quinone) activity"/>
    <property type="evidence" value="ECO:0007669"/>
    <property type="project" value="UniProtKB-EC"/>
</dbReference>
<dbReference type="GO" id="GO:0006207">
    <property type="term" value="P:'de novo' pyrimidine nucleobase biosynthetic process"/>
    <property type="evidence" value="ECO:0007669"/>
    <property type="project" value="InterPro"/>
</dbReference>
<dbReference type="GO" id="GO:0044205">
    <property type="term" value="P:'de novo' UMP biosynthetic process"/>
    <property type="evidence" value="ECO:0007669"/>
    <property type="project" value="UniProtKB-UniRule"/>
</dbReference>
<dbReference type="CDD" id="cd04738">
    <property type="entry name" value="DHOD_2_like"/>
    <property type="match status" value="1"/>
</dbReference>
<dbReference type="FunFam" id="3.20.20.70:FF:000028">
    <property type="entry name" value="Dihydroorotate dehydrogenase (quinone)"/>
    <property type="match status" value="1"/>
</dbReference>
<dbReference type="Gene3D" id="3.20.20.70">
    <property type="entry name" value="Aldolase class I"/>
    <property type="match status" value="1"/>
</dbReference>
<dbReference type="HAMAP" id="MF_00225">
    <property type="entry name" value="DHO_dh_type2"/>
    <property type="match status" value="1"/>
</dbReference>
<dbReference type="InterPro" id="IPR013785">
    <property type="entry name" value="Aldolase_TIM"/>
</dbReference>
<dbReference type="InterPro" id="IPR050074">
    <property type="entry name" value="DHO_dehydrogenase"/>
</dbReference>
<dbReference type="InterPro" id="IPR012135">
    <property type="entry name" value="Dihydroorotate_DH_1_2"/>
</dbReference>
<dbReference type="InterPro" id="IPR005719">
    <property type="entry name" value="Dihydroorotate_DH_2"/>
</dbReference>
<dbReference type="InterPro" id="IPR005720">
    <property type="entry name" value="Dihydroorotate_DH_cat"/>
</dbReference>
<dbReference type="InterPro" id="IPR001295">
    <property type="entry name" value="Dihydroorotate_DH_CS"/>
</dbReference>
<dbReference type="NCBIfam" id="NF003644">
    <property type="entry name" value="PRK05286.1-1"/>
    <property type="match status" value="1"/>
</dbReference>
<dbReference type="NCBIfam" id="NF003645">
    <property type="entry name" value="PRK05286.1-2"/>
    <property type="match status" value="1"/>
</dbReference>
<dbReference type="NCBIfam" id="NF003646">
    <property type="entry name" value="PRK05286.1-4"/>
    <property type="match status" value="1"/>
</dbReference>
<dbReference type="NCBIfam" id="NF003652">
    <property type="entry name" value="PRK05286.2-5"/>
    <property type="match status" value="1"/>
</dbReference>
<dbReference type="NCBIfam" id="TIGR01036">
    <property type="entry name" value="pyrD_sub2"/>
    <property type="match status" value="1"/>
</dbReference>
<dbReference type="PANTHER" id="PTHR48109:SF4">
    <property type="entry name" value="DIHYDROOROTATE DEHYDROGENASE (QUINONE), MITOCHONDRIAL"/>
    <property type="match status" value="1"/>
</dbReference>
<dbReference type="PANTHER" id="PTHR48109">
    <property type="entry name" value="DIHYDROOROTATE DEHYDROGENASE (QUINONE), MITOCHONDRIAL-RELATED"/>
    <property type="match status" value="1"/>
</dbReference>
<dbReference type="Pfam" id="PF01180">
    <property type="entry name" value="DHO_dh"/>
    <property type="match status" value="1"/>
</dbReference>
<dbReference type="PIRSF" id="PIRSF000164">
    <property type="entry name" value="DHO_oxidase"/>
    <property type="match status" value="1"/>
</dbReference>
<dbReference type="SUPFAM" id="SSF51395">
    <property type="entry name" value="FMN-linked oxidoreductases"/>
    <property type="match status" value="1"/>
</dbReference>
<dbReference type="PROSITE" id="PS00911">
    <property type="entry name" value="DHODEHASE_1"/>
    <property type="match status" value="1"/>
</dbReference>
<reference key="1">
    <citation type="journal article" date="2008" name="Proc. Natl. Acad. Sci. U.S.A.">
        <title>Nitrogen fixation island and rhizosphere competence traits in the genome of root-associated Pseudomonas stutzeri A1501.</title>
        <authorList>
            <person name="Yan Y."/>
            <person name="Yang J."/>
            <person name="Dou Y."/>
            <person name="Chen M."/>
            <person name="Ping S."/>
            <person name="Peng J."/>
            <person name="Lu W."/>
            <person name="Zhang W."/>
            <person name="Yao Z."/>
            <person name="Li H."/>
            <person name="Liu W."/>
            <person name="He S."/>
            <person name="Geng L."/>
            <person name="Zhang X."/>
            <person name="Yang F."/>
            <person name="Yu H."/>
            <person name="Zhan Y."/>
            <person name="Li D."/>
            <person name="Lin Z."/>
            <person name="Wang Y."/>
            <person name="Elmerich C."/>
            <person name="Lin M."/>
            <person name="Jin Q."/>
        </authorList>
    </citation>
    <scope>NUCLEOTIDE SEQUENCE [LARGE SCALE GENOMIC DNA]</scope>
    <source>
        <strain>A1501</strain>
    </source>
</reference>
<sequence>MYNLARQLLFKLSPETSHELSLELIGAGGRLGLNAMLSKPPASLPVRVMGLDFPNPVGLAAGLDKNGEAIRGLSQLGFGFIEVGTVTPRPQPGNPKPRIFRLPEAEAIINRMGFNNHGVDALLARVEAARFKGVLGINIGKNFDTPVERADEDYLLCLDKVYHHASYVTVNVSSPNTPGLRSLQFGDSLKQLLDALRLRREDLEIMHGKRVPLAIKIAPDMTDEETALVGEAVFQAGMDAIIATNTTLGREGVAGLAHADEAGGLSGAPVRDKSTHTVKVLAQTLGGRLPIIAVGGITEGRHAAEKIEAGASLVQLYSGFIYKGPALIREAVDAIAALRSQAK</sequence>
<evidence type="ECO:0000255" key="1">
    <source>
        <dbReference type="HAMAP-Rule" id="MF_00225"/>
    </source>
</evidence>
<proteinExistence type="inferred from homology"/>
<accession>A4VM41</accession>